<feature type="chain" id="PRO_1000142995" description="Large ribosomal subunit protein uL16">
    <location>
        <begin position="1"/>
        <end position="137"/>
    </location>
</feature>
<comment type="function">
    <text evidence="1">Binds 23S rRNA and is also seen to make contacts with the A and possibly P site tRNAs.</text>
</comment>
<comment type="subunit">
    <text evidence="1">Part of the 50S ribosomal subunit.</text>
</comment>
<comment type="similarity">
    <text evidence="1">Belongs to the universal ribosomal protein uL16 family.</text>
</comment>
<reference key="1">
    <citation type="submission" date="2008-04" db="EMBL/GenBank/DDBJ databases">
        <title>Complete sequence of chromosome of Methylobacterium populi BJ001.</title>
        <authorList>
            <consortium name="US DOE Joint Genome Institute"/>
            <person name="Copeland A."/>
            <person name="Lucas S."/>
            <person name="Lapidus A."/>
            <person name="Glavina del Rio T."/>
            <person name="Dalin E."/>
            <person name="Tice H."/>
            <person name="Bruce D."/>
            <person name="Goodwin L."/>
            <person name="Pitluck S."/>
            <person name="Chertkov O."/>
            <person name="Brettin T."/>
            <person name="Detter J.C."/>
            <person name="Han C."/>
            <person name="Kuske C.R."/>
            <person name="Schmutz J."/>
            <person name="Larimer F."/>
            <person name="Land M."/>
            <person name="Hauser L."/>
            <person name="Kyrpides N."/>
            <person name="Mikhailova N."/>
            <person name="Marx C."/>
            <person name="Richardson P."/>
        </authorList>
    </citation>
    <scope>NUCLEOTIDE SEQUENCE [LARGE SCALE GENOMIC DNA]</scope>
    <source>
        <strain>ATCC BAA-705 / NCIMB 13946 / BJ001</strain>
    </source>
</reference>
<dbReference type="EMBL" id="CP001029">
    <property type="protein sequence ID" value="ACB80292.1"/>
    <property type="molecule type" value="Genomic_DNA"/>
</dbReference>
<dbReference type="RefSeq" id="WP_003597105.1">
    <property type="nucleotide sequence ID" value="NC_010725.1"/>
</dbReference>
<dbReference type="SMR" id="B1Z759"/>
<dbReference type="STRING" id="441620.Mpop_2130"/>
<dbReference type="GeneID" id="72989857"/>
<dbReference type="KEGG" id="mpo:Mpop_2130"/>
<dbReference type="eggNOG" id="COG0197">
    <property type="taxonomic scope" value="Bacteria"/>
</dbReference>
<dbReference type="HOGENOM" id="CLU_078858_2_1_5"/>
<dbReference type="OrthoDB" id="9802589at2"/>
<dbReference type="Proteomes" id="UP000007136">
    <property type="component" value="Chromosome"/>
</dbReference>
<dbReference type="GO" id="GO:0022625">
    <property type="term" value="C:cytosolic large ribosomal subunit"/>
    <property type="evidence" value="ECO:0007669"/>
    <property type="project" value="TreeGrafter"/>
</dbReference>
<dbReference type="GO" id="GO:0019843">
    <property type="term" value="F:rRNA binding"/>
    <property type="evidence" value="ECO:0007669"/>
    <property type="project" value="UniProtKB-UniRule"/>
</dbReference>
<dbReference type="GO" id="GO:0003735">
    <property type="term" value="F:structural constituent of ribosome"/>
    <property type="evidence" value="ECO:0007669"/>
    <property type="project" value="InterPro"/>
</dbReference>
<dbReference type="GO" id="GO:0000049">
    <property type="term" value="F:tRNA binding"/>
    <property type="evidence" value="ECO:0007669"/>
    <property type="project" value="UniProtKB-KW"/>
</dbReference>
<dbReference type="GO" id="GO:0006412">
    <property type="term" value="P:translation"/>
    <property type="evidence" value="ECO:0007669"/>
    <property type="project" value="UniProtKB-UniRule"/>
</dbReference>
<dbReference type="CDD" id="cd01433">
    <property type="entry name" value="Ribosomal_L16_L10e"/>
    <property type="match status" value="1"/>
</dbReference>
<dbReference type="FunFam" id="3.90.1170.10:FF:000001">
    <property type="entry name" value="50S ribosomal protein L16"/>
    <property type="match status" value="1"/>
</dbReference>
<dbReference type="Gene3D" id="3.90.1170.10">
    <property type="entry name" value="Ribosomal protein L10e/L16"/>
    <property type="match status" value="1"/>
</dbReference>
<dbReference type="HAMAP" id="MF_01342">
    <property type="entry name" value="Ribosomal_uL16"/>
    <property type="match status" value="1"/>
</dbReference>
<dbReference type="InterPro" id="IPR047873">
    <property type="entry name" value="Ribosomal_uL16"/>
</dbReference>
<dbReference type="InterPro" id="IPR000114">
    <property type="entry name" value="Ribosomal_uL16_bact-type"/>
</dbReference>
<dbReference type="InterPro" id="IPR020798">
    <property type="entry name" value="Ribosomal_uL16_CS"/>
</dbReference>
<dbReference type="InterPro" id="IPR016180">
    <property type="entry name" value="Ribosomal_uL16_dom"/>
</dbReference>
<dbReference type="InterPro" id="IPR036920">
    <property type="entry name" value="Ribosomal_uL16_sf"/>
</dbReference>
<dbReference type="NCBIfam" id="TIGR01164">
    <property type="entry name" value="rplP_bact"/>
    <property type="match status" value="1"/>
</dbReference>
<dbReference type="PANTHER" id="PTHR12220">
    <property type="entry name" value="50S/60S RIBOSOMAL PROTEIN L16"/>
    <property type="match status" value="1"/>
</dbReference>
<dbReference type="PANTHER" id="PTHR12220:SF13">
    <property type="entry name" value="LARGE RIBOSOMAL SUBUNIT PROTEIN UL16M"/>
    <property type="match status" value="1"/>
</dbReference>
<dbReference type="Pfam" id="PF00252">
    <property type="entry name" value="Ribosomal_L16"/>
    <property type="match status" value="1"/>
</dbReference>
<dbReference type="PRINTS" id="PR00060">
    <property type="entry name" value="RIBOSOMALL16"/>
</dbReference>
<dbReference type="SUPFAM" id="SSF54686">
    <property type="entry name" value="Ribosomal protein L16p/L10e"/>
    <property type="match status" value="1"/>
</dbReference>
<dbReference type="PROSITE" id="PS00586">
    <property type="entry name" value="RIBOSOMAL_L16_1"/>
    <property type="match status" value="1"/>
</dbReference>
<dbReference type="PROSITE" id="PS00701">
    <property type="entry name" value="RIBOSOMAL_L16_2"/>
    <property type="match status" value="1"/>
</dbReference>
<proteinExistence type="inferred from homology"/>
<gene>
    <name evidence="1" type="primary">rplP</name>
    <name type="ordered locus">Mpop_2130</name>
</gene>
<sequence length="137" mass="15457">MLQPKKTKFRKQFKGRISGAAKGGFELNFGQFGLKCLEPERITARQIEAARRAITREMKRQGRVWIRVFPDLPVTAKPTEVRMGSGKGAPEYWAARVHPGRIMFEVDGVAEDIAREALRLGAAKLPVRTRVIQRIAD</sequence>
<organism>
    <name type="scientific">Methylorubrum populi (strain ATCC BAA-705 / NCIMB 13946 / BJ001)</name>
    <name type="common">Methylobacterium populi</name>
    <dbReference type="NCBI Taxonomy" id="441620"/>
    <lineage>
        <taxon>Bacteria</taxon>
        <taxon>Pseudomonadati</taxon>
        <taxon>Pseudomonadota</taxon>
        <taxon>Alphaproteobacteria</taxon>
        <taxon>Hyphomicrobiales</taxon>
        <taxon>Methylobacteriaceae</taxon>
        <taxon>Methylorubrum</taxon>
    </lineage>
</organism>
<accession>B1Z759</accession>
<protein>
    <recommendedName>
        <fullName evidence="1">Large ribosomal subunit protein uL16</fullName>
    </recommendedName>
    <alternativeName>
        <fullName evidence="2">50S ribosomal protein L16</fullName>
    </alternativeName>
</protein>
<keyword id="KW-0687">Ribonucleoprotein</keyword>
<keyword id="KW-0689">Ribosomal protein</keyword>
<keyword id="KW-0694">RNA-binding</keyword>
<keyword id="KW-0699">rRNA-binding</keyword>
<keyword id="KW-0820">tRNA-binding</keyword>
<evidence type="ECO:0000255" key="1">
    <source>
        <dbReference type="HAMAP-Rule" id="MF_01342"/>
    </source>
</evidence>
<evidence type="ECO:0000305" key="2"/>
<name>RL16_METPB</name>